<organism>
    <name type="scientific">Xanthomonas oryzae pv. oryzae (strain KACC10331 / KXO85)</name>
    <dbReference type="NCBI Taxonomy" id="291331"/>
    <lineage>
        <taxon>Bacteria</taxon>
        <taxon>Pseudomonadati</taxon>
        <taxon>Pseudomonadota</taxon>
        <taxon>Gammaproteobacteria</taxon>
        <taxon>Lysobacterales</taxon>
        <taxon>Lysobacteraceae</taxon>
        <taxon>Xanthomonas</taxon>
    </lineage>
</organism>
<protein>
    <recommendedName>
        <fullName evidence="1">Putative pterin-4-alpha-carbinolamine dehydratase</fullName>
        <shortName evidence="1">PHS</shortName>
        <ecNumber evidence="1">4.2.1.96</ecNumber>
    </recommendedName>
    <alternativeName>
        <fullName evidence="1">4-alpha-hydroxy-tetrahydropterin dehydratase</fullName>
    </alternativeName>
    <alternativeName>
        <fullName evidence="1">Pterin carbinolamine dehydratase</fullName>
        <shortName evidence="1">PCD</shortName>
    </alternativeName>
</protein>
<gene>
    <name type="ordered locus">XOO3067</name>
</gene>
<feature type="chain" id="PRO_0000231479" description="Putative pterin-4-alpha-carbinolamine dehydratase">
    <location>
        <begin position="1"/>
        <end position="118"/>
    </location>
</feature>
<comment type="catalytic activity">
    <reaction evidence="1">
        <text>(4aS,6R)-4a-hydroxy-L-erythro-5,6,7,8-tetrahydrobiopterin = (6R)-L-erythro-6,7-dihydrobiopterin + H2O</text>
        <dbReference type="Rhea" id="RHEA:11920"/>
        <dbReference type="ChEBI" id="CHEBI:15377"/>
        <dbReference type="ChEBI" id="CHEBI:15642"/>
        <dbReference type="ChEBI" id="CHEBI:43120"/>
        <dbReference type="EC" id="4.2.1.96"/>
    </reaction>
</comment>
<comment type="similarity">
    <text evidence="1">Belongs to the pterin-4-alpha-carbinolamine dehydratase family.</text>
</comment>
<comment type="sequence caution" evidence="2">
    <conflict type="erroneous initiation">
        <sequence resource="EMBL-CDS" id="AAW76321"/>
    </conflict>
</comment>
<accession>Q5GYA0</accession>
<sequence>MTDLIPLEQAHCLPRKGSDHKLGEARLAELLPQVPGWELAEAGMALTRTFRFADYYHTLAFVNALAWIAHREDHHPDLGVHYDRVVVRYSTHDVGGLSENDFICAAKTARLYDQGITA</sequence>
<name>PHS_XANOR</name>
<evidence type="ECO:0000255" key="1">
    <source>
        <dbReference type="HAMAP-Rule" id="MF_00434"/>
    </source>
</evidence>
<evidence type="ECO:0000305" key="2"/>
<keyword id="KW-0456">Lyase</keyword>
<keyword id="KW-1185">Reference proteome</keyword>
<dbReference type="EC" id="4.2.1.96" evidence="1"/>
<dbReference type="EMBL" id="AE013598">
    <property type="protein sequence ID" value="AAW76321.1"/>
    <property type="status" value="ALT_INIT"/>
    <property type="molecule type" value="Genomic_DNA"/>
</dbReference>
<dbReference type="SMR" id="Q5GYA0"/>
<dbReference type="STRING" id="291331.XOO3067"/>
<dbReference type="KEGG" id="xoo:XOO3067"/>
<dbReference type="HOGENOM" id="CLU_081974_2_1_6"/>
<dbReference type="Proteomes" id="UP000006735">
    <property type="component" value="Chromosome"/>
</dbReference>
<dbReference type="GO" id="GO:0008124">
    <property type="term" value="F:4-alpha-hydroxytetrahydrobiopterin dehydratase activity"/>
    <property type="evidence" value="ECO:0007669"/>
    <property type="project" value="UniProtKB-UniRule"/>
</dbReference>
<dbReference type="GO" id="GO:0006729">
    <property type="term" value="P:tetrahydrobiopterin biosynthetic process"/>
    <property type="evidence" value="ECO:0007669"/>
    <property type="project" value="InterPro"/>
</dbReference>
<dbReference type="CDD" id="cd00913">
    <property type="entry name" value="PCD_DCoH_subfamily_a"/>
    <property type="match status" value="1"/>
</dbReference>
<dbReference type="Gene3D" id="3.30.1360.20">
    <property type="entry name" value="Transcriptional coactivator/pterin dehydratase"/>
    <property type="match status" value="1"/>
</dbReference>
<dbReference type="HAMAP" id="MF_00434">
    <property type="entry name" value="Pterin_4_alpha"/>
    <property type="match status" value="1"/>
</dbReference>
<dbReference type="InterPro" id="IPR036428">
    <property type="entry name" value="PCD_sf"/>
</dbReference>
<dbReference type="InterPro" id="IPR001533">
    <property type="entry name" value="Pterin_deHydtase"/>
</dbReference>
<dbReference type="NCBIfam" id="NF002019">
    <property type="entry name" value="PRK00823.1-4"/>
    <property type="match status" value="1"/>
</dbReference>
<dbReference type="PANTHER" id="PTHR12599">
    <property type="entry name" value="PTERIN-4-ALPHA-CARBINOLAMINE DEHYDRATASE"/>
    <property type="match status" value="1"/>
</dbReference>
<dbReference type="PANTHER" id="PTHR12599:SF0">
    <property type="entry name" value="PTERIN-4-ALPHA-CARBINOLAMINE DEHYDRATASE"/>
    <property type="match status" value="1"/>
</dbReference>
<dbReference type="Pfam" id="PF01329">
    <property type="entry name" value="Pterin_4a"/>
    <property type="match status" value="1"/>
</dbReference>
<dbReference type="SUPFAM" id="SSF55248">
    <property type="entry name" value="PCD-like"/>
    <property type="match status" value="1"/>
</dbReference>
<proteinExistence type="inferred from homology"/>
<reference key="1">
    <citation type="journal article" date="2005" name="Nucleic Acids Res.">
        <title>The genome sequence of Xanthomonas oryzae pathovar oryzae KACC10331, the bacterial blight pathogen of rice.</title>
        <authorList>
            <person name="Lee B.-M."/>
            <person name="Park Y.-J."/>
            <person name="Park D.-S."/>
            <person name="Kang H.-W."/>
            <person name="Kim J.-G."/>
            <person name="Song E.-S."/>
            <person name="Park I.-C."/>
            <person name="Yoon U.-H."/>
            <person name="Hahn J.-H."/>
            <person name="Koo B.-S."/>
            <person name="Lee G.-B."/>
            <person name="Kim H."/>
            <person name="Park H.-S."/>
            <person name="Yoon K.-O."/>
            <person name="Kim J.-H."/>
            <person name="Jung C.-H."/>
            <person name="Koh N.-H."/>
            <person name="Seo J.-S."/>
            <person name="Go S.-J."/>
        </authorList>
    </citation>
    <scope>NUCLEOTIDE SEQUENCE [LARGE SCALE GENOMIC DNA]</scope>
    <source>
        <strain>KACC10331 / KXO85</strain>
    </source>
</reference>